<organism>
    <name type="scientific">Tropheryma whipplei (strain TW08/27)</name>
    <name type="common">Whipple's bacillus</name>
    <dbReference type="NCBI Taxonomy" id="218496"/>
    <lineage>
        <taxon>Bacteria</taxon>
        <taxon>Bacillati</taxon>
        <taxon>Actinomycetota</taxon>
        <taxon>Actinomycetes</taxon>
        <taxon>Micrococcales</taxon>
        <taxon>Tropherymataceae</taxon>
        <taxon>Tropheryma</taxon>
    </lineage>
</organism>
<proteinExistence type="inferred from homology"/>
<feature type="chain" id="PRO_0000177448" description="Large ribosomal subunit protein bL35">
    <location>
        <begin position="1"/>
        <end position="65"/>
    </location>
</feature>
<feature type="region of interest" description="Disordered" evidence="2">
    <location>
        <begin position="1"/>
        <end position="39"/>
    </location>
</feature>
<feature type="compositionally biased region" description="Basic residues" evidence="2">
    <location>
        <begin position="1"/>
        <end position="16"/>
    </location>
</feature>
<sequence length="65" mass="7308">MVPKQKTHSGAKKRFKLTGSGSVSRARAGMRHNFEHRSSRVTRRLTGRQFVSDADSKLARKLLGK</sequence>
<evidence type="ECO:0000255" key="1">
    <source>
        <dbReference type="HAMAP-Rule" id="MF_00514"/>
    </source>
</evidence>
<evidence type="ECO:0000256" key="2">
    <source>
        <dbReference type="SAM" id="MobiDB-lite"/>
    </source>
</evidence>
<evidence type="ECO:0000305" key="3"/>
<name>RL35_TROW8</name>
<comment type="similarity">
    <text evidence="1">Belongs to the bacterial ribosomal protein bL35 family.</text>
</comment>
<dbReference type="EMBL" id="BX251412">
    <property type="protein sequence ID" value="CAD67272.1"/>
    <property type="molecule type" value="Genomic_DNA"/>
</dbReference>
<dbReference type="SMR" id="Q83HH1"/>
<dbReference type="KEGG" id="tws:TW607"/>
<dbReference type="HOGENOM" id="CLU_169643_4_2_11"/>
<dbReference type="GO" id="GO:0022625">
    <property type="term" value="C:cytosolic large ribosomal subunit"/>
    <property type="evidence" value="ECO:0007669"/>
    <property type="project" value="TreeGrafter"/>
</dbReference>
<dbReference type="GO" id="GO:0003735">
    <property type="term" value="F:structural constituent of ribosome"/>
    <property type="evidence" value="ECO:0007669"/>
    <property type="project" value="InterPro"/>
</dbReference>
<dbReference type="GO" id="GO:0006412">
    <property type="term" value="P:translation"/>
    <property type="evidence" value="ECO:0007669"/>
    <property type="project" value="UniProtKB-UniRule"/>
</dbReference>
<dbReference type="FunFam" id="4.10.410.60:FF:000001">
    <property type="entry name" value="50S ribosomal protein L35"/>
    <property type="match status" value="1"/>
</dbReference>
<dbReference type="Gene3D" id="4.10.410.60">
    <property type="match status" value="1"/>
</dbReference>
<dbReference type="HAMAP" id="MF_00514">
    <property type="entry name" value="Ribosomal_bL35"/>
    <property type="match status" value="1"/>
</dbReference>
<dbReference type="InterPro" id="IPR001706">
    <property type="entry name" value="Ribosomal_bL35"/>
</dbReference>
<dbReference type="InterPro" id="IPR021137">
    <property type="entry name" value="Ribosomal_bL35-like"/>
</dbReference>
<dbReference type="InterPro" id="IPR018265">
    <property type="entry name" value="Ribosomal_bL35_CS"/>
</dbReference>
<dbReference type="InterPro" id="IPR037229">
    <property type="entry name" value="Ribosomal_bL35_sf"/>
</dbReference>
<dbReference type="NCBIfam" id="TIGR00001">
    <property type="entry name" value="rpmI_bact"/>
    <property type="match status" value="1"/>
</dbReference>
<dbReference type="PANTHER" id="PTHR33343">
    <property type="entry name" value="54S RIBOSOMAL PROTEIN BL35M"/>
    <property type="match status" value="1"/>
</dbReference>
<dbReference type="PANTHER" id="PTHR33343:SF1">
    <property type="entry name" value="LARGE RIBOSOMAL SUBUNIT PROTEIN BL35M"/>
    <property type="match status" value="1"/>
</dbReference>
<dbReference type="Pfam" id="PF01632">
    <property type="entry name" value="Ribosomal_L35p"/>
    <property type="match status" value="1"/>
</dbReference>
<dbReference type="PRINTS" id="PR00064">
    <property type="entry name" value="RIBOSOMALL35"/>
</dbReference>
<dbReference type="SUPFAM" id="SSF143034">
    <property type="entry name" value="L35p-like"/>
    <property type="match status" value="1"/>
</dbReference>
<dbReference type="PROSITE" id="PS00936">
    <property type="entry name" value="RIBOSOMAL_L35"/>
    <property type="match status" value="1"/>
</dbReference>
<protein>
    <recommendedName>
        <fullName evidence="1">Large ribosomal subunit protein bL35</fullName>
    </recommendedName>
    <alternativeName>
        <fullName evidence="3">50S ribosomal protein L35</fullName>
    </alternativeName>
</protein>
<keyword id="KW-0687">Ribonucleoprotein</keyword>
<keyword id="KW-0689">Ribosomal protein</keyword>
<gene>
    <name evidence="1" type="primary">rpmI</name>
    <name type="ordered locus">TW607</name>
</gene>
<reference key="1">
    <citation type="journal article" date="2003" name="Lancet">
        <title>Sequencing and analysis of the genome of the Whipple's disease bacterium Tropheryma whipplei.</title>
        <authorList>
            <person name="Bentley S.D."/>
            <person name="Maiwald M."/>
            <person name="Murphy L.D."/>
            <person name="Pallen M.J."/>
            <person name="Yeats C.A."/>
            <person name="Dover L.G."/>
            <person name="Norbertczak H.T."/>
            <person name="Besra G.S."/>
            <person name="Quail M.A."/>
            <person name="Harris D.E."/>
            <person name="von Herbay A."/>
            <person name="Goble A."/>
            <person name="Rutter S."/>
            <person name="Squares R."/>
            <person name="Squares S."/>
            <person name="Barrell B.G."/>
            <person name="Parkhill J."/>
            <person name="Relman D.A."/>
        </authorList>
    </citation>
    <scope>NUCLEOTIDE SEQUENCE [LARGE SCALE GENOMIC DNA]</scope>
    <source>
        <strain>TW08/27</strain>
    </source>
</reference>
<accession>Q83HH1</accession>